<proteinExistence type="inferred from homology"/>
<protein>
    <recommendedName>
        <fullName evidence="1">Aspartate carbamoyltransferase catalytic subunit</fullName>
        <ecNumber evidence="1">2.1.3.2</ecNumber>
    </recommendedName>
    <alternativeName>
        <fullName evidence="1">Aspartate transcarbamylase</fullName>
        <shortName evidence="1">ATCase</shortName>
    </alternativeName>
</protein>
<reference key="1">
    <citation type="journal article" date="2007" name="J. Bacteriol.">
        <title>Genome-wide transcriptional changes in Streptococcus gordonii in response to competence signaling peptide.</title>
        <authorList>
            <person name="Vickerman M.M."/>
            <person name="Iobst S."/>
            <person name="Jesionowski A.M."/>
            <person name="Gill S.R."/>
        </authorList>
    </citation>
    <scope>NUCLEOTIDE SEQUENCE [LARGE SCALE GENOMIC DNA]</scope>
    <source>
        <strain>Challis / ATCC 35105 / BCRC 15272 / CH1 / DL1 / V288</strain>
    </source>
</reference>
<evidence type="ECO:0000255" key="1">
    <source>
        <dbReference type="HAMAP-Rule" id="MF_00001"/>
    </source>
</evidence>
<keyword id="KW-0665">Pyrimidine biosynthesis</keyword>
<keyword id="KW-1185">Reference proteome</keyword>
<keyword id="KW-0808">Transferase</keyword>
<gene>
    <name evidence="1" type="primary">pyrB</name>
    <name type="ordered locus">SGO_1109</name>
</gene>
<organism>
    <name type="scientific">Streptococcus gordonii (strain Challis / ATCC 35105 / BCRC 15272 / CH1 / DL1 / V288)</name>
    <dbReference type="NCBI Taxonomy" id="467705"/>
    <lineage>
        <taxon>Bacteria</taxon>
        <taxon>Bacillati</taxon>
        <taxon>Bacillota</taxon>
        <taxon>Bacilli</taxon>
        <taxon>Lactobacillales</taxon>
        <taxon>Streptococcaceae</taxon>
        <taxon>Streptococcus</taxon>
    </lineage>
</organism>
<accession>A8AX88</accession>
<name>PYRB_STRGC</name>
<comment type="function">
    <text evidence="1">Catalyzes the condensation of carbamoyl phosphate and aspartate to form carbamoyl aspartate and inorganic phosphate, the committed step in the de novo pyrimidine nucleotide biosynthesis pathway.</text>
</comment>
<comment type="catalytic activity">
    <reaction evidence="1">
        <text>carbamoyl phosphate + L-aspartate = N-carbamoyl-L-aspartate + phosphate + H(+)</text>
        <dbReference type="Rhea" id="RHEA:20013"/>
        <dbReference type="ChEBI" id="CHEBI:15378"/>
        <dbReference type="ChEBI" id="CHEBI:29991"/>
        <dbReference type="ChEBI" id="CHEBI:32814"/>
        <dbReference type="ChEBI" id="CHEBI:43474"/>
        <dbReference type="ChEBI" id="CHEBI:58228"/>
        <dbReference type="EC" id="2.1.3.2"/>
    </reaction>
</comment>
<comment type="pathway">
    <text evidence="1">Pyrimidine metabolism; UMP biosynthesis via de novo pathway; (S)-dihydroorotate from bicarbonate: step 2/3.</text>
</comment>
<comment type="subunit">
    <text evidence="1">Heterododecamer (2C3:3R2) of six catalytic PyrB chains organized as two trimers (C3), and six regulatory PyrI chains organized as three dimers (R2).</text>
</comment>
<comment type="similarity">
    <text evidence="1">Belongs to the aspartate/ornithine carbamoyltransferase superfamily. ATCase family.</text>
</comment>
<sequence>MSSNQIALKNLVSMETLSNEEVMALIKRGIEFKNGAKANYDEQHIVANLFFEPSTRTHKAFEVAELKLGCDLLDFDVKTSSVNKGETLYDTILTMSALGVDICVIRHPEVDYYKELVESPTITTSIVNGGDGSGQHPSQSLLDLMTIYQEFGHFEGLKVAIAGDLDHSRVAKSNMQILKRLGAELYFAGPEEWRSEEFSHYGEFVTIDEVVDKVDVMMFLRVQHERHDYESIFSKENYHRLHGLTQERYDRMKDTAILMHPAPVNRDVEIADHLVEAPKSRIVEQMTNGVFVRMAIIEAVLKGREK</sequence>
<dbReference type="EC" id="2.1.3.2" evidence="1"/>
<dbReference type="EMBL" id="CP000725">
    <property type="protein sequence ID" value="ABV09520.1"/>
    <property type="molecule type" value="Genomic_DNA"/>
</dbReference>
<dbReference type="RefSeq" id="WP_012000520.1">
    <property type="nucleotide sequence ID" value="NC_009785.1"/>
</dbReference>
<dbReference type="SMR" id="A8AX88"/>
<dbReference type="STRING" id="467705.SGO_1109"/>
<dbReference type="KEGG" id="sgo:SGO_1109"/>
<dbReference type="eggNOG" id="COG0540">
    <property type="taxonomic scope" value="Bacteria"/>
</dbReference>
<dbReference type="HOGENOM" id="CLU_043846_2_1_9"/>
<dbReference type="UniPathway" id="UPA00070">
    <property type="reaction ID" value="UER00116"/>
</dbReference>
<dbReference type="Proteomes" id="UP000001131">
    <property type="component" value="Chromosome"/>
</dbReference>
<dbReference type="GO" id="GO:0005829">
    <property type="term" value="C:cytosol"/>
    <property type="evidence" value="ECO:0007669"/>
    <property type="project" value="TreeGrafter"/>
</dbReference>
<dbReference type="GO" id="GO:0016597">
    <property type="term" value="F:amino acid binding"/>
    <property type="evidence" value="ECO:0007669"/>
    <property type="project" value="InterPro"/>
</dbReference>
<dbReference type="GO" id="GO:0004070">
    <property type="term" value="F:aspartate carbamoyltransferase activity"/>
    <property type="evidence" value="ECO:0007669"/>
    <property type="project" value="UniProtKB-UniRule"/>
</dbReference>
<dbReference type="GO" id="GO:0006207">
    <property type="term" value="P:'de novo' pyrimidine nucleobase biosynthetic process"/>
    <property type="evidence" value="ECO:0007669"/>
    <property type="project" value="InterPro"/>
</dbReference>
<dbReference type="GO" id="GO:0044205">
    <property type="term" value="P:'de novo' UMP biosynthetic process"/>
    <property type="evidence" value="ECO:0007669"/>
    <property type="project" value="UniProtKB-UniRule"/>
</dbReference>
<dbReference type="GO" id="GO:0006520">
    <property type="term" value="P:amino acid metabolic process"/>
    <property type="evidence" value="ECO:0007669"/>
    <property type="project" value="InterPro"/>
</dbReference>
<dbReference type="FunFam" id="3.40.50.1370:FF:000011">
    <property type="entry name" value="Aspartate carbamoyltransferase"/>
    <property type="match status" value="1"/>
</dbReference>
<dbReference type="Gene3D" id="3.40.50.1370">
    <property type="entry name" value="Aspartate/ornithine carbamoyltransferase"/>
    <property type="match status" value="2"/>
</dbReference>
<dbReference type="HAMAP" id="MF_00001">
    <property type="entry name" value="Asp_carb_tr"/>
    <property type="match status" value="1"/>
</dbReference>
<dbReference type="InterPro" id="IPR006132">
    <property type="entry name" value="Asp/Orn_carbamoyltranf_P-bd"/>
</dbReference>
<dbReference type="InterPro" id="IPR006130">
    <property type="entry name" value="Asp/Orn_carbamoylTrfase"/>
</dbReference>
<dbReference type="InterPro" id="IPR036901">
    <property type="entry name" value="Asp/Orn_carbamoylTrfase_sf"/>
</dbReference>
<dbReference type="InterPro" id="IPR002082">
    <property type="entry name" value="Asp_carbamoyltransf"/>
</dbReference>
<dbReference type="InterPro" id="IPR006131">
    <property type="entry name" value="Asp_carbamoyltransf_Asp/Orn-bd"/>
</dbReference>
<dbReference type="NCBIfam" id="TIGR00670">
    <property type="entry name" value="asp_carb_tr"/>
    <property type="match status" value="1"/>
</dbReference>
<dbReference type="NCBIfam" id="NF002032">
    <property type="entry name" value="PRK00856.1"/>
    <property type="match status" value="1"/>
</dbReference>
<dbReference type="PANTHER" id="PTHR45753:SF6">
    <property type="entry name" value="ASPARTATE CARBAMOYLTRANSFERASE"/>
    <property type="match status" value="1"/>
</dbReference>
<dbReference type="PANTHER" id="PTHR45753">
    <property type="entry name" value="ORNITHINE CARBAMOYLTRANSFERASE, MITOCHONDRIAL"/>
    <property type="match status" value="1"/>
</dbReference>
<dbReference type="Pfam" id="PF00185">
    <property type="entry name" value="OTCace"/>
    <property type="match status" value="1"/>
</dbReference>
<dbReference type="Pfam" id="PF02729">
    <property type="entry name" value="OTCace_N"/>
    <property type="match status" value="1"/>
</dbReference>
<dbReference type="PRINTS" id="PR00100">
    <property type="entry name" value="AOTCASE"/>
</dbReference>
<dbReference type="PRINTS" id="PR00101">
    <property type="entry name" value="ATCASE"/>
</dbReference>
<dbReference type="SUPFAM" id="SSF53671">
    <property type="entry name" value="Aspartate/ornithine carbamoyltransferase"/>
    <property type="match status" value="1"/>
</dbReference>
<dbReference type="PROSITE" id="PS00097">
    <property type="entry name" value="CARBAMOYLTRANSFERASE"/>
    <property type="match status" value="1"/>
</dbReference>
<feature type="chain" id="PRO_1000073744" description="Aspartate carbamoyltransferase catalytic subunit">
    <location>
        <begin position="1"/>
        <end position="306"/>
    </location>
</feature>
<feature type="binding site" evidence="1">
    <location>
        <position position="56"/>
    </location>
    <ligand>
        <name>carbamoyl phosphate</name>
        <dbReference type="ChEBI" id="CHEBI:58228"/>
    </ligand>
</feature>
<feature type="binding site" evidence="1">
    <location>
        <position position="57"/>
    </location>
    <ligand>
        <name>carbamoyl phosphate</name>
        <dbReference type="ChEBI" id="CHEBI:58228"/>
    </ligand>
</feature>
<feature type="binding site" evidence="1">
    <location>
        <position position="84"/>
    </location>
    <ligand>
        <name>L-aspartate</name>
        <dbReference type="ChEBI" id="CHEBI:29991"/>
    </ligand>
</feature>
<feature type="binding site" evidence="1">
    <location>
        <position position="106"/>
    </location>
    <ligand>
        <name>carbamoyl phosphate</name>
        <dbReference type="ChEBI" id="CHEBI:58228"/>
    </ligand>
</feature>
<feature type="binding site" evidence="1">
    <location>
        <position position="136"/>
    </location>
    <ligand>
        <name>carbamoyl phosphate</name>
        <dbReference type="ChEBI" id="CHEBI:58228"/>
    </ligand>
</feature>
<feature type="binding site" evidence="1">
    <location>
        <position position="139"/>
    </location>
    <ligand>
        <name>carbamoyl phosphate</name>
        <dbReference type="ChEBI" id="CHEBI:58228"/>
    </ligand>
</feature>
<feature type="binding site" evidence="1">
    <location>
        <position position="169"/>
    </location>
    <ligand>
        <name>L-aspartate</name>
        <dbReference type="ChEBI" id="CHEBI:29991"/>
    </ligand>
</feature>
<feature type="binding site" evidence="1">
    <location>
        <position position="221"/>
    </location>
    <ligand>
        <name>L-aspartate</name>
        <dbReference type="ChEBI" id="CHEBI:29991"/>
    </ligand>
</feature>
<feature type="binding site" evidence="1">
    <location>
        <position position="262"/>
    </location>
    <ligand>
        <name>carbamoyl phosphate</name>
        <dbReference type="ChEBI" id="CHEBI:58228"/>
    </ligand>
</feature>
<feature type="binding site" evidence="1">
    <location>
        <position position="263"/>
    </location>
    <ligand>
        <name>carbamoyl phosphate</name>
        <dbReference type="ChEBI" id="CHEBI:58228"/>
    </ligand>
</feature>